<name>SEPF_LIMF3</name>
<accession>B2GB82</accession>
<feature type="chain" id="PRO_1000138471" description="Cell division protein SepF">
    <location>
        <begin position="1"/>
        <end position="156"/>
    </location>
</feature>
<feature type="region of interest" description="Disordered" evidence="2">
    <location>
        <begin position="17"/>
        <end position="44"/>
    </location>
</feature>
<reference key="1">
    <citation type="journal article" date="2008" name="DNA Res.">
        <title>Comparative genome analysis of Lactobacillus reuteri and Lactobacillus fermentum reveal a genomic island for reuterin and cobalamin production.</title>
        <authorList>
            <person name="Morita H."/>
            <person name="Toh H."/>
            <person name="Fukuda S."/>
            <person name="Horikawa H."/>
            <person name="Oshima K."/>
            <person name="Suzuki T."/>
            <person name="Murakami M."/>
            <person name="Hisamatsu S."/>
            <person name="Kato Y."/>
            <person name="Takizawa T."/>
            <person name="Fukuoka H."/>
            <person name="Yoshimura T."/>
            <person name="Itoh K."/>
            <person name="O'Sullivan D.J."/>
            <person name="McKay L.L."/>
            <person name="Ohno H."/>
            <person name="Kikuchi J."/>
            <person name="Masaoka T."/>
            <person name="Hattori M."/>
        </authorList>
    </citation>
    <scope>NUCLEOTIDE SEQUENCE [LARGE SCALE GENOMIC DNA]</scope>
    <source>
        <strain>NBRC 3956 / LMG 18251</strain>
    </source>
</reference>
<gene>
    <name evidence="1" type="primary">sepF</name>
    <name type="ordered locus">LAF_0578</name>
</gene>
<evidence type="ECO:0000255" key="1">
    <source>
        <dbReference type="HAMAP-Rule" id="MF_01197"/>
    </source>
</evidence>
<evidence type="ECO:0000256" key="2">
    <source>
        <dbReference type="SAM" id="MobiDB-lite"/>
    </source>
</evidence>
<keyword id="KW-0131">Cell cycle</keyword>
<keyword id="KW-0132">Cell division</keyword>
<keyword id="KW-0963">Cytoplasm</keyword>
<keyword id="KW-1185">Reference proteome</keyword>
<keyword id="KW-0717">Septation</keyword>
<comment type="function">
    <text evidence="1">Cell division protein that is part of the divisome complex and is recruited early to the Z-ring. Probably stimulates Z-ring formation, perhaps through the cross-linking of FtsZ protofilaments. Its function overlaps with FtsA.</text>
</comment>
<comment type="subunit">
    <text evidence="1">Homodimer. Interacts with FtsZ.</text>
</comment>
<comment type="subcellular location">
    <subcellularLocation>
        <location evidence="1">Cytoplasm</location>
    </subcellularLocation>
    <text evidence="1">Localizes to the division site, in a FtsZ-dependent manner.</text>
</comment>
<comment type="similarity">
    <text evidence="1">Belongs to the SepF family.</text>
</comment>
<organism>
    <name type="scientific">Limosilactobacillus fermentum (strain NBRC 3956 / LMG 18251)</name>
    <name type="common">Lactobacillus fermentum</name>
    <dbReference type="NCBI Taxonomy" id="334390"/>
    <lineage>
        <taxon>Bacteria</taxon>
        <taxon>Bacillati</taxon>
        <taxon>Bacillota</taxon>
        <taxon>Bacilli</taxon>
        <taxon>Lactobacillales</taxon>
        <taxon>Lactobacillaceae</taxon>
        <taxon>Limosilactobacillus</taxon>
    </lineage>
</organism>
<proteinExistence type="inferred from homology"/>
<sequence>MASKFFSNLFGVVDDEPETADYYEDQQPAQQAPAPVPTPAPTRSNKVVSINNARVAPQPNSSSKIELVEPRVYGDGKEIVNHLLNGNAVIVNFDQMDAKVAFRIVEYMKGATYAISGKIERIDAEIFLCTPQNFEISGKLAPTLSSDGLDDRGDRY</sequence>
<protein>
    <recommendedName>
        <fullName evidence="1">Cell division protein SepF</fullName>
    </recommendedName>
</protein>
<dbReference type="EMBL" id="AP008937">
    <property type="protein sequence ID" value="BAG26914.1"/>
    <property type="molecule type" value="Genomic_DNA"/>
</dbReference>
<dbReference type="RefSeq" id="WP_003686336.1">
    <property type="nucleotide sequence ID" value="NC_010610.1"/>
</dbReference>
<dbReference type="SMR" id="B2GB82"/>
<dbReference type="KEGG" id="lfe:LAF_0578"/>
<dbReference type="eggNOG" id="COG1799">
    <property type="taxonomic scope" value="Bacteria"/>
</dbReference>
<dbReference type="HOGENOM" id="CLU_078499_4_1_9"/>
<dbReference type="Proteomes" id="UP000001697">
    <property type="component" value="Chromosome"/>
</dbReference>
<dbReference type="GO" id="GO:0005737">
    <property type="term" value="C:cytoplasm"/>
    <property type="evidence" value="ECO:0007669"/>
    <property type="project" value="UniProtKB-SubCell"/>
</dbReference>
<dbReference type="GO" id="GO:0000917">
    <property type="term" value="P:division septum assembly"/>
    <property type="evidence" value="ECO:0007669"/>
    <property type="project" value="UniProtKB-KW"/>
</dbReference>
<dbReference type="GO" id="GO:0043093">
    <property type="term" value="P:FtsZ-dependent cytokinesis"/>
    <property type="evidence" value="ECO:0007669"/>
    <property type="project" value="UniProtKB-UniRule"/>
</dbReference>
<dbReference type="Gene3D" id="3.30.110.150">
    <property type="entry name" value="SepF-like protein"/>
    <property type="match status" value="1"/>
</dbReference>
<dbReference type="HAMAP" id="MF_01197">
    <property type="entry name" value="SepF"/>
    <property type="match status" value="1"/>
</dbReference>
<dbReference type="InterPro" id="IPR023052">
    <property type="entry name" value="Cell_div_SepF"/>
</dbReference>
<dbReference type="InterPro" id="IPR007561">
    <property type="entry name" value="Cell_div_SepF/SepF-rel"/>
</dbReference>
<dbReference type="InterPro" id="IPR038594">
    <property type="entry name" value="SepF-like_sf"/>
</dbReference>
<dbReference type="PANTHER" id="PTHR35798">
    <property type="entry name" value="CELL DIVISION PROTEIN SEPF"/>
    <property type="match status" value="1"/>
</dbReference>
<dbReference type="PANTHER" id="PTHR35798:SF1">
    <property type="entry name" value="CELL DIVISION PROTEIN SEPF"/>
    <property type="match status" value="1"/>
</dbReference>
<dbReference type="Pfam" id="PF04472">
    <property type="entry name" value="SepF"/>
    <property type="match status" value="1"/>
</dbReference>